<proteinExistence type="inferred from homology"/>
<gene>
    <name evidence="1" type="primary">kefB</name>
    <name type="ordered locus">SbBS512_E3725</name>
</gene>
<name>KEFB_SHIB3</name>
<sequence length="601" mass="66437">MEGSDFLLAGVLFLFAAVAAVPLASRLGIGAVLGYLLAGIAIGPWGLGFISDVDEILHFSELGVVFLMFIIGLELNPSKLWQLRRSIFGVGAAQVLLSAALLAGLLMLTDFAWQAAVVGGIGLAMSSTAMALQLMREKGMNRSESGQLGFSVLLFQDLAVIPALALVPLLAGSADEHFDWMKIGMKVLAFVGMLIGGRYLLRPVFRFIAASGVREVFTAATLLLVLGSALFMDALGLSMALGTFIAGVLLAESEYRHELETAIDPFKGLLLGLFFISVGMSLNLGVLYIHLLWVVISVVVLVAVKILVLYLLARLYGVRSSERMQFAGVLSQGGEFAFVLFSTASSQRLFQGDQMALLLVTVTLSMMTTPLLMKLVDKWLSRQFNGPEEEDEKPWVNDDKPQVIVVGFGRFGQVIGRLLMANKMRITVLERDISAVNLMRKYGYKVYYGDATQVDLLRSAGAEAAESIVITCNEPEDTMKLVEICQQHFPHLHILARARGRVEAHELLQAGVTQFSRETFSSALELGRKTLVTLGMHPHQAQRAQLHFRRLDMRMLRELIPMHADTVQISRAREARRELEEIFQREMQQERRQLDGWDEFE</sequence>
<accession>B2U3F5</accession>
<feature type="chain" id="PRO_1000145532" description="Glutathione-regulated potassium-efflux system protein KefB">
    <location>
        <begin position="1"/>
        <end position="601"/>
    </location>
</feature>
<feature type="transmembrane region" description="Helical" evidence="1">
    <location>
        <begin position="4"/>
        <end position="24"/>
    </location>
</feature>
<feature type="transmembrane region" description="Helical" evidence="1">
    <location>
        <begin position="29"/>
        <end position="49"/>
    </location>
</feature>
<feature type="transmembrane region" description="Helical" evidence="1">
    <location>
        <begin position="55"/>
        <end position="75"/>
    </location>
</feature>
<feature type="transmembrane region" description="Helical" evidence="1">
    <location>
        <begin position="87"/>
        <end position="107"/>
    </location>
</feature>
<feature type="transmembrane region" description="Helical" evidence="1">
    <location>
        <begin position="115"/>
        <end position="135"/>
    </location>
</feature>
<feature type="transmembrane region" description="Helical" evidence="1">
    <location>
        <begin position="152"/>
        <end position="172"/>
    </location>
</feature>
<feature type="transmembrane region" description="Helical" evidence="1">
    <location>
        <begin position="177"/>
        <end position="197"/>
    </location>
</feature>
<feature type="transmembrane region" description="Helical" evidence="1">
    <location>
        <begin position="207"/>
        <end position="227"/>
    </location>
</feature>
<feature type="transmembrane region" description="Helical" evidence="1">
    <location>
        <begin position="230"/>
        <end position="250"/>
    </location>
</feature>
<feature type="transmembrane region" description="Helical" evidence="1">
    <location>
        <begin position="262"/>
        <end position="282"/>
    </location>
</feature>
<feature type="transmembrane region" description="Helical" evidence="1">
    <location>
        <begin position="284"/>
        <end position="304"/>
    </location>
</feature>
<feature type="transmembrane region" description="Helical" evidence="1">
    <location>
        <begin position="324"/>
        <end position="344"/>
    </location>
</feature>
<feature type="transmembrane region" description="Helical" evidence="1">
    <location>
        <begin position="356"/>
        <end position="376"/>
    </location>
</feature>
<feature type="domain" description="RCK N-terminal" evidence="2">
    <location>
        <begin position="400"/>
        <end position="519"/>
    </location>
</feature>
<comment type="function">
    <text evidence="1">Pore-forming subunit of a potassium efflux system that confers protection against electrophiles. Catalyzes K(+)/H(+) antiport.</text>
</comment>
<comment type="subunit">
    <text evidence="1">Interacts with the regulatory subunit KefG.</text>
</comment>
<comment type="subcellular location">
    <subcellularLocation>
        <location evidence="1">Cell inner membrane</location>
        <topology evidence="1">Multi-pass membrane protein</topology>
    </subcellularLocation>
</comment>
<comment type="similarity">
    <text evidence="1">Belongs to the monovalent cation:proton antiporter 2 (CPA2) transporter (TC 2.A.37) family. KefB subfamily.</text>
</comment>
<organism>
    <name type="scientific">Shigella boydii serotype 18 (strain CDC 3083-94 / BS512)</name>
    <dbReference type="NCBI Taxonomy" id="344609"/>
    <lineage>
        <taxon>Bacteria</taxon>
        <taxon>Pseudomonadati</taxon>
        <taxon>Pseudomonadota</taxon>
        <taxon>Gammaproteobacteria</taxon>
        <taxon>Enterobacterales</taxon>
        <taxon>Enterobacteriaceae</taxon>
        <taxon>Shigella</taxon>
    </lineage>
</organism>
<evidence type="ECO:0000255" key="1">
    <source>
        <dbReference type="HAMAP-Rule" id="MF_01412"/>
    </source>
</evidence>
<evidence type="ECO:0000255" key="2">
    <source>
        <dbReference type="PROSITE-ProRule" id="PRU00543"/>
    </source>
</evidence>
<keyword id="KW-0050">Antiport</keyword>
<keyword id="KW-0997">Cell inner membrane</keyword>
<keyword id="KW-1003">Cell membrane</keyword>
<keyword id="KW-0406">Ion transport</keyword>
<keyword id="KW-0472">Membrane</keyword>
<keyword id="KW-0630">Potassium</keyword>
<keyword id="KW-0633">Potassium transport</keyword>
<keyword id="KW-1185">Reference proteome</keyword>
<keyword id="KW-0812">Transmembrane</keyword>
<keyword id="KW-1133">Transmembrane helix</keyword>
<keyword id="KW-0813">Transport</keyword>
<reference key="1">
    <citation type="submission" date="2008-05" db="EMBL/GenBank/DDBJ databases">
        <title>Complete sequence of Shigella boydii serotype 18 strain BS512.</title>
        <authorList>
            <person name="Rasko D.A."/>
            <person name="Rosovitz M."/>
            <person name="Maurelli A.T."/>
            <person name="Myers G."/>
            <person name="Seshadri R."/>
            <person name="Cer R."/>
            <person name="Jiang L."/>
            <person name="Ravel J."/>
            <person name="Sebastian Y."/>
        </authorList>
    </citation>
    <scope>NUCLEOTIDE SEQUENCE [LARGE SCALE GENOMIC DNA]</scope>
    <source>
        <strain>CDC 3083-94 / BS512</strain>
    </source>
</reference>
<protein>
    <recommendedName>
        <fullName evidence="1">Glutathione-regulated potassium-efflux system protein KefB</fullName>
    </recommendedName>
    <alternativeName>
        <fullName evidence="1">K(+)/H(+) antiporter</fullName>
    </alternativeName>
</protein>
<dbReference type="EMBL" id="CP001063">
    <property type="protein sequence ID" value="ACD10229.1"/>
    <property type="molecule type" value="Genomic_DNA"/>
</dbReference>
<dbReference type="RefSeq" id="WP_000399107.1">
    <property type="nucleotide sequence ID" value="NC_010658.1"/>
</dbReference>
<dbReference type="SMR" id="B2U3F5"/>
<dbReference type="STRING" id="344609.SbBS512_E3725"/>
<dbReference type="KEGG" id="sbc:SbBS512_E3725"/>
<dbReference type="HOGENOM" id="CLU_005126_9_3_6"/>
<dbReference type="Proteomes" id="UP000001030">
    <property type="component" value="Chromosome"/>
</dbReference>
<dbReference type="GO" id="GO:0005886">
    <property type="term" value="C:plasma membrane"/>
    <property type="evidence" value="ECO:0007669"/>
    <property type="project" value="UniProtKB-SubCell"/>
</dbReference>
<dbReference type="GO" id="GO:0015503">
    <property type="term" value="F:glutathione-regulated potassium exporter activity"/>
    <property type="evidence" value="ECO:0007669"/>
    <property type="project" value="UniProtKB-UniRule"/>
</dbReference>
<dbReference type="GO" id="GO:1902600">
    <property type="term" value="P:proton transmembrane transport"/>
    <property type="evidence" value="ECO:0007669"/>
    <property type="project" value="InterPro"/>
</dbReference>
<dbReference type="FunFam" id="1.20.1530.20:FF:000001">
    <property type="entry name" value="Glutathione-regulated potassium-efflux system protein KefB"/>
    <property type="match status" value="1"/>
</dbReference>
<dbReference type="FunFam" id="3.40.50.720:FF:000036">
    <property type="entry name" value="Glutathione-regulated potassium-efflux system protein KefB"/>
    <property type="match status" value="1"/>
</dbReference>
<dbReference type="Gene3D" id="1.20.1530.20">
    <property type="match status" value="1"/>
</dbReference>
<dbReference type="Gene3D" id="3.40.50.720">
    <property type="entry name" value="NAD(P)-binding Rossmann-like Domain"/>
    <property type="match status" value="1"/>
</dbReference>
<dbReference type="HAMAP" id="MF_01412">
    <property type="entry name" value="K_H_efflux_KefB"/>
    <property type="match status" value="1"/>
</dbReference>
<dbReference type="InterPro" id="IPR006153">
    <property type="entry name" value="Cation/H_exchanger_TM"/>
</dbReference>
<dbReference type="InterPro" id="IPR004771">
    <property type="entry name" value="K/H_exchanger"/>
</dbReference>
<dbReference type="InterPro" id="IPR020884">
    <property type="entry name" value="K_H_efflux_KefB"/>
</dbReference>
<dbReference type="InterPro" id="IPR038770">
    <property type="entry name" value="Na+/solute_symporter_sf"/>
</dbReference>
<dbReference type="InterPro" id="IPR036291">
    <property type="entry name" value="NAD(P)-bd_dom_sf"/>
</dbReference>
<dbReference type="InterPro" id="IPR003148">
    <property type="entry name" value="RCK_N"/>
</dbReference>
<dbReference type="NCBIfam" id="TIGR00932">
    <property type="entry name" value="2a37"/>
    <property type="match status" value="1"/>
</dbReference>
<dbReference type="NCBIfam" id="NF002973">
    <property type="entry name" value="PRK03659.1"/>
    <property type="match status" value="1"/>
</dbReference>
<dbReference type="PANTHER" id="PTHR46157">
    <property type="entry name" value="K(+) EFFLUX ANTIPORTER 3, CHLOROPLASTIC"/>
    <property type="match status" value="1"/>
</dbReference>
<dbReference type="PANTHER" id="PTHR46157:SF4">
    <property type="entry name" value="K(+) EFFLUX ANTIPORTER 3, CHLOROPLASTIC"/>
    <property type="match status" value="1"/>
</dbReference>
<dbReference type="Pfam" id="PF00999">
    <property type="entry name" value="Na_H_Exchanger"/>
    <property type="match status" value="1"/>
</dbReference>
<dbReference type="Pfam" id="PF02254">
    <property type="entry name" value="TrkA_N"/>
    <property type="match status" value="1"/>
</dbReference>
<dbReference type="SUPFAM" id="SSF51735">
    <property type="entry name" value="NAD(P)-binding Rossmann-fold domains"/>
    <property type="match status" value="1"/>
</dbReference>
<dbReference type="PROSITE" id="PS51201">
    <property type="entry name" value="RCK_N"/>
    <property type="match status" value="1"/>
</dbReference>